<proteinExistence type="inferred from homology"/>
<comment type="function">
    <text evidence="1">Involved in the biosynthesis of isopentenyl diphosphate (IPP) and dimethylallyl diphosphate (DMAPP), two major building blocks of isoprenoid compounds. Catalyzes the conversion of 4-diphosphocytidyl-2-C-methyl-D-erythritol 2-phosphate (CDP-ME2P) to 2-C-methyl-D-erythritol 2,4-cyclodiphosphate (ME-CPP) with a corresponding release of cytidine 5-monophosphate (CMP).</text>
</comment>
<comment type="catalytic activity">
    <reaction evidence="1">
        <text>4-CDP-2-C-methyl-D-erythritol 2-phosphate = 2-C-methyl-D-erythritol 2,4-cyclic diphosphate + CMP</text>
        <dbReference type="Rhea" id="RHEA:23864"/>
        <dbReference type="ChEBI" id="CHEBI:57919"/>
        <dbReference type="ChEBI" id="CHEBI:58483"/>
        <dbReference type="ChEBI" id="CHEBI:60377"/>
        <dbReference type="EC" id="4.6.1.12"/>
    </reaction>
</comment>
<comment type="cofactor">
    <cofactor evidence="1">
        <name>a divalent metal cation</name>
        <dbReference type="ChEBI" id="CHEBI:60240"/>
    </cofactor>
    <text evidence="1">Binds 1 divalent metal cation per subunit.</text>
</comment>
<comment type="pathway">
    <text evidence="1">Isoprenoid biosynthesis; isopentenyl diphosphate biosynthesis via DXP pathway; isopentenyl diphosphate from 1-deoxy-D-xylulose 5-phosphate: step 4/6.</text>
</comment>
<comment type="subunit">
    <text evidence="1">Homotrimer.</text>
</comment>
<comment type="similarity">
    <text evidence="1">Belongs to the IspF family.</text>
</comment>
<evidence type="ECO:0000255" key="1">
    <source>
        <dbReference type="HAMAP-Rule" id="MF_00107"/>
    </source>
</evidence>
<name>ISPF_SHESR</name>
<organism>
    <name type="scientific">Shewanella sp. (strain MR-7)</name>
    <dbReference type="NCBI Taxonomy" id="60481"/>
    <lineage>
        <taxon>Bacteria</taxon>
        <taxon>Pseudomonadati</taxon>
        <taxon>Pseudomonadota</taxon>
        <taxon>Gammaproteobacteria</taxon>
        <taxon>Alteromonadales</taxon>
        <taxon>Shewanellaceae</taxon>
        <taxon>Shewanella</taxon>
    </lineage>
</organism>
<feature type="chain" id="PRO_1000022884" description="2-C-methyl-D-erythritol 2,4-cyclodiphosphate synthase">
    <location>
        <begin position="1"/>
        <end position="159"/>
    </location>
</feature>
<feature type="binding site" evidence="1">
    <location>
        <begin position="10"/>
        <end position="12"/>
    </location>
    <ligand>
        <name>4-CDP-2-C-methyl-D-erythritol 2-phosphate</name>
        <dbReference type="ChEBI" id="CHEBI:57919"/>
    </ligand>
</feature>
<feature type="binding site" evidence="1">
    <location>
        <position position="10"/>
    </location>
    <ligand>
        <name>a divalent metal cation</name>
        <dbReference type="ChEBI" id="CHEBI:60240"/>
    </ligand>
</feature>
<feature type="binding site" evidence="1">
    <location>
        <position position="12"/>
    </location>
    <ligand>
        <name>a divalent metal cation</name>
        <dbReference type="ChEBI" id="CHEBI:60240"/>
    </ligand>
</feature>
<feature type="binding site" evidence="1">
    <location>
        <begin position="36"/>
        <end position="37"/>
    </location>
    <ligand>
        <name>4-CDP-2-C-methyl-D-erythritol 2-phosphate</name>
        <dbReference type="ChEBI" id="CHEBI:57919"/>
    </ligand>
</feature>
<feature type="binding site" evidence="1">
    <location>
        <position position="44"/>
    </location>
    <ligand>
        <name>a divalent metal cation</name>
        <dbReference type="ChEBI" id="CHEBI:60240"/>
    </ligand>
</feature>
<feature type="binding site" evidence="1">
    <location>
        <begin position="58"/>
        <end position="60"/>
    </location>
    <ligand>
        <name>4-CDP-2-C-methyl-D-erythritol 2-phosphate</name>
        <dbReference type="ChEBI" id="CHEBI:57919"/>
    </ligand>
</feature>
<feature type="binding site" evidence="1">
    <location>
        <begin position="63"/>
        <end position="67"/>
    </location>
    <ligand>
        <name>4-CDP-2-C-methyl-D-erythritol 2-phosphate</name>
        <dbReference type="ChEBI" id="CHEBI:57919"/>
    </ligand>
</feature>
<feature type="binding site" evidence="1">
    <location>
        <begin position="102"/>
        <end position="108"/>
    </location>
    <ligand>
        <name>4-CDP-2-C-methyl-D-erythritol 2-phosphate</name>
        <dbReference type="ChEBI" id="CHEBI:57919"/>
    </ligand>
</feature>
<feature type="binding site" evidence="1">
    <location>
        <begin position="134"/>
        <end position="137"/>
    </location>
    <ligand>
        <name>4-CDP-2-C-methyl-D-erythritol 2-phosphate</name>
        <dbReference type="ChEBI" id="CHEBI:57919"/>
    </ligand>
</feature>
<feature type="binding site" evidence="1">
    <location>
        <position position="141"/>
    </location>
    <ligand>
        <name>4-CDP-2-C-methyl-D-erythritol 2-phosphate</name>
        <dbReference type="ChEBI" id="CHEBI:57919"/>
    </ligand>
</feature>
<feature type="binding site" evidence="1">
    <location>
        <position position="144"/>
    </location>
    <ligand>
        <name>4-CDP-2-C-methyl-D-erythritol 2-phosphate</name>
        <dbReference type="ChEBI" id="CHEBI:57919"/>
    </ligand>
</feature>
<feature type="site" description="Transition state stabilizer" evidence="1">
    <location>
        <position position="36"/>
    </location>
</feature>
<feature type="site" description="Transition state stabilizer" evidence="1">
    <location>
        <position position="135"/>
    </location>
</feature>
<dbReference type="EC" id="4.6.1.12" evidence="1"/>
<dbReference type="EMBL" id="CP000444">
    <property type="protein sequence ID" value="ABI42188.1"/>
    <property type="molecule type" value="Genomic_DNA"/>
</dbReference>
<dbReference type="SMR" id="Q0HXG7"/>
<dbReference type="KEGG" id="shm:Shewmr7_1189"/>
<dbReference type="HOGENOM" id="CLU_084630_2_0_6"/>
<dbReference type="UniPathway" id="UPA00056">
    <property type="reaction ID" value="UER00095"/>
</dbReference>
<dbReference type="GO" id="GO:0008685">
    <property type="term" value="F:2-C-methyl-D-erythritol 2,4-cyclodiphosphate synthase activity"/>
    <property type="evidence" value="ECO:0007669"/>
    <property type="project" value="UniProtKB-UniRule"/>
</dbReference>
<dbReference type="GO" id="GO:0046872">
    <property type="term" value="F:metal ion binding"/>
    <property type="evidence" value="ECO:0007669"/>
    <property type="project" value="UniProtKB-KW"/>
</dbReference>
<dbReference type="GO" id="GO:0019288">
    <property type="term" value="P:isopentenyl diphosphate biosynthetic process, methylerythritol 4-phosphate pathway"/>
    <property type="evidence" value="ECO:0007669"/>
    <property type="project" value="UniProtKB-UniRule"/>
</dbReference>
<dbReference type="GO" id="GO:0016114">
    <property type="term" value="P:terpenoid biosynthetic process"/>
    <property type="evidence" value="ECO:0007669"/>
    <property type="project" value="InterPro"/>
</dbReference>
<dbReference type="CDD" id="cd00554">
    <property type="entry name" value="MECDP_synthase"/>
    <property type="match status" value="1"/>
</dbReference>
<dbReference type="FunFam" id="3.30.1330.50:FF:000001">
    <property type="entry name" value="2-C-methyl-D-erythritol 2,4-cyclodiphosphate synthase"/>
    <property type="match status" value="1"/>
</dbReference>
<dbReference type="Gene3D" id="3.30.1330.50">
    <property type="entry name" value="2-C-methyl-D-erythritol 2,4-cyclodiphosphate synthase"/>
    <property type="match status" value="1"/>
</dbReference>
<dbReference type="HAMAP" id="MF_00107">
    <property type="entry name" value="IspF"/>
    <property type="match status" value="1"/>
</dbReference>
<dbReference type="InterPro" id="IPR003526">
    <property type="entry name" value="MECDP_synthase"/>
</dbReference>
<dbReference type="InterPro" id="IPR020555">
    <property type="entry name" value="MECDP_synthase_CS"/>
</dbReference>
<dbReference type="InterPro" id="IPR036571">
    <property type="entry name" value="MECDP_synthase_sf"/>
</dbReference>
<dbReference type="NCBIfam" id="TIGR00151">
    <property type="entry name" value="ispF"/>
    <property type="match status" value="1"/>
</dbReference>
<dbReference type="PANTHER" id="PTHR43181">
    <property type="entry name" value="2-C-METHYL-D-ERYTHRITOL 2,4-CYCLODIPHOSPHATE SYNTHASE, CHLOROPLASTIC"/>
    <property type="match status" value="1"/>
</dbReference>
<dbReference type="PANTHER" id="PTHR43181:SF1">
    <property type="entry name" value="2-C-METHYL-D-ERYTHRITOL 2,4-CYCLODIPHOSPHATE SYNTHASE, CHLOROPLASTIC"/>
    <property type="match status" value="1"/>
</dbReference>
<dbReference type="Pfam" id="PF02542">
    <property type="entry name" value="YgbB"/>
    <property type="match status" value="1"/>
</dbReference>
<dbReference type="SUPFAM" id="SSF69765">
    <property type="entry name" value="IpsF-like"/>
    <property type="match status" value="1"/>
</dbReference>
<dbReference type="PROSITE" id="PS01350">
    <property type="entry name" value="ISPF"/>
    <property type="match status" value="1"/>
</dbReference>
<sequence>MKIRIGHGFDVHKFGEARPLILCGVEVPYETGLVAHSDGDVVLHAISDAILGAMALGDIGKHFPDTDAAYKGADSRVLLRHCYALARAKGFELGNLDVTIIAQAPKMAPHIEDMRQVLAADLNADIADINVKATTTEKLGFTGRKEGIAVEAVVLLSRQ</sequence>
<keyword id="KW-0414">Isoprene biosynthesis</keyword>
<keyword id="KW-0456">Lyase</keyword>
<keyword id="KW-0479">Metal-binding</keyword>
<reference key="1">
    <citation type="submission" date="2006-08" db="EMBL/GenBank/DDBJ databases">
        <title>Complete sequence of chromosome 1 of Shewanella sp. MR-7.</title>
        <authorList>
            <person name="Copeland A."/>
            <person name="Lucas S."/>
            <person name="Lapidus A."/>
            <person name="Barry K."/>
            <person name="Detter J.C."/>
            <person name="Glavina del Rio T."/>
            <person name="Hammon N."/>
            <person name="Israni S."/>
            <person name="Dalin E."/>
            <person name="Tice H."/>
            <person name="Pitluck S."/>
            <person name="Kiss H."/>
            <person name="Brettin T."/>
            <person name="Bruce D."/>
            <person name="Han C."/>
            <person name="Tapia R."/>
            <person name="Gilna P."/>
            <person name="Schmutz J."/>
            <person name="Larimer F."/>
            <person name="Land M."/>
            <person name="Hauser L."/>
            <person name="Kyrpides N."/>
            <person name="Mikhailova N."/>
            <person name="Nealson K."/>
            <person name="Konstantinidis K."/>
            <person name="Klappenbach J."/>
            <person name="Tiedje J."/>
            <person name="Richardson P."/>
        </authorList>
    </citation>
    <scope>NUCLEOTIDE SEQUENCE [LARGE SCALE GENOMIC DNA]</scope>
    <source>
        <strain>MR-7</strain>
    </source>
</reference>
<gene>
    <name evidence="1" type="primary">ispF</name>
    <name type="ordered locus">Shewmr7_1189</name>
</gene>
<accession>Q0HXG7</accession>
<protein>
    <recommendedName>
        <fullName evidence="1">2-C-methyl-D-erythritol 2,4-cyclodiphosphate synthase</fullName>
        <shortName evidence="1">MECDP-synthase</shortName>
        <shortName evidence="1">MECPP-synthase</shortName>
        <shortName evidence="1">MECPS</shortName>
        <ecNumber evidence="1">4.6.1.12</ecNumber>
    </recommendedName>
</protein>